<feature type="chain" id="PRO_0000414565" description="Cell division protein FtsL">
    <location>
        <begin position="1"/>
        <end position="97"/>
    </location>
</feature>
<feature type="topological domain" description="Cytoplasmic" evidence="1">
    <location>
        <begin position="1"/>
        <end position="11"/>
    </location>
</feature>
<feature type="transmembrane region" description="Helical" evidence="1">
    <location>
        <begin position="12"/>
        <end position="32"/>
    </location>
</feature>
<feature type="topological domain" description="Periplasmic" evidence="1">
    <location>
        <begin position="33"/>
        <end position="97"/>
    </location>
</feature>
<feature type="helix" evidence="2">
    <location>
        <begin position="13"/>
        <end position="68"/>
    </location>
</feature>
<feature type="helix" evidence="2">
    <location>
        <begin position="71"/>
        <end position="80"/>
    </location>
</feature>
<feature type="turn" evidence="2">
    <location>
        <begin position="89"/>
        <end position="91"/>
    </location>
</feature>
<feature type="strand" evidence="2">
    <location>
        <begin position="92"/>
        <end position="94"/>
    </location>
</feature>
<proteinExistence type="evidence at protein level"/>
<organism>
    <name type="scientific">Pseudomonas aeruginosa (strain ATCC 15692 / DSM 22644 / CIP 104116 / JCM 14847 / LMG 12228 / 1C / PRS 101 / PAO1)</name>
    <dbReference type="NCBI Taxonomy" id="208964"/>
    <lineage>
        <taxon>Bacteria</taxon>
        <taxon>Pseudomonadati</taxon>
        <taxon>Pseudomonadota</taxon>
        <taxon>Gammaproteobacteria</taxon>
        <taxon>Pseudomonadales</taxon>
        <taxon>Pseudomonadaceae</taxon>
        <taxon>Pseudomonas</taxon>
    </lineage>
</organism>
<dbReference type="EMBL" id="AE004091">
    <property type="protein sequence ID" value="AAG07807.1"/>
    <property type="molecule type" value="Genomic_DNA"/>
</dbReference>
<dbReference type="PIR" id="D83095">
    <property type="entry name" value="D83095"/>
</dbReference>
<dbReference type="RefSeq" id="NP_253109.1">
    <property type="nucleotide sequence ID" value="NC_002516.2"/>
</dbReference>
<dbReference type="RefSeq" id="WP_003094142.1">
    <property type="nucleotide sequence ID" value="NZ_QZGE01000004.1"/>
</dbReference>
<dbReference type="PDB" id="8BH1">
    <property type="method" value="EM"/>
    <property type="resolution" value="3.80 A"/>
    <property type="chains" value="D=1-97"/>
</dbReference>
<dbReference type="PDB" id="8P1U">
    <property type="method" value="EM"/>
    <property type="resolution" value="3.30 A"/>
    <property type="chains" value="C=1-97"/>
</dbReference>
<dbReference type="PDBsum" id="8BH1"/>
<dbReference type="PDBsum" id="8P1U"/>
<dbReference type="EMDB" id="EMD-16042"/>
<dbReference type="EMDB" id="EMD-17356"/>
<dbReference type="SMR" id="Q9HVZ6"/>
<dbReference type="FunCoup" id="Q9HVZ6">
    <property type="interactions" value="121"/>
</dbReference>
<dbReference type="STRING" id="208964.PA4419"/>
<dbReference type="PaxDb" id="208964-PA4419"/>
<dbReference type="DNASU" id="881233"/>
<dbReference type="GeneID" id="881233"/>
<dbReference type="KEGG" id="pae:PA4419"/>
<dbReference type="PATRIC" id="fig|208964.12.peg.4628"/>
<dbReference type="PseudoCAP" id="PA4419"/>
<dbReference type="HOGENOM" id="CLU_156524_1_3_6"/>
<dbReference type="InParanoid" id="Q9HVZ6"/>
<dbReference type="OrthoDB" id="5298556at2"/>
<dbReference type="PhylomeDB" id="Q9HVZ6"/>
<dbReference type="BioCyc" id="PAER208964:G1FZ6-4506-MONOMER"/>
<dbReference type="Proteomes" id="UP000002438">
    <property type="component" value="Chromosome"/>
</dbReference>
<dbReference type="GO" id="GO:0032153">
    <property type="term" value="C:cell division site"/>
    <property type="evidence" value="ECO:0000318"/>
    <property type="project" value="GO_Central"/>
</dbReference>
<dbReference type="GO" id="GO:0005886">
    <property type="term" value="C:plasma membrane"/>
    <property type="evidence" value="ECO:0000318"/>
    <property type="project" value="GO_Central"/>
</dbReference>
<dbReference type="GO" id="GO:0043093">
    <property type="term" value="P:FtsZ-dependent cytokinesis"/>
    <property type="evidence" value="ECO:0000318"/>
    <property type="project" value="GO_Central"/>
</dbReference>
<dbReference type="HAMAP" id="MF_00910">
    <property type="entry name" value="FtsL"/>
    <property type="match status" value="1"/>
</dbReference>
<dbReference type="InterPro" id="IPR011922">
    <property type="entry name" value="Cell_div_FtsL"/>
</dbReference>
<dbReference type="NCBIfam" id="TIGR02209">
    <property type="entry name" value="ftsL_broad"/>
    <property type="match status" value="1"/>
</dbReference>
<dbReference type="PANTHER" id="PTHR37479">
    <property type="entry name" value="CELL DIVISION PROTEIN FTSL"/>
    <property type="match status" value="1"/>
</dbReference>
<dbReference type="PANTHER" id="PTHR37479:SF1">
    <property type="entry name" value="CELL DIVISION PROTEIN FTSL"/>
    <property type="match status" value="1"/>
</dbReference>
<dbReference type="Pfam" id="PF04999">
    <property type="entry name" value="FtsL"/>
    <property type="match status" value="1"/>
</dbReference>
<protein>
    <recommendedName>
        <fullName evidence="1">Cell division protein FtsL</fullName>
    </recommendedName>
</protein>
<name>FTSL_PSEAE</name>
<gene>
    <name evidence="1" type="primary">ftsL</name>
    <name type="ordered locus">PA4419</name>
</gene>
<accession>Q9HVZ6</accession>
<sequence length="97" mass="11138">MSRLFVKRLPTGSFLMLLLYIGLLLSAIAVAYSTYWNRQLLNSLYSELSVRDKAQAEWGRLILEQSTWTAHSRIESLAVEQLRMRVPDPAEVRMVAP</sequence>
<reference key="1">
    <citation type="journal article" date="2000" name="Nature">
        <title>Complete genome sequence of Pseudomonas aeruginosa PAO1, an opportunistic pathogen.</title>
        <authorList>
            <person name="Stover C.K."/>
            <person name="Pham X.-Q.T."/>
            <person name="Erwin A.L."/>
            <person name="Mizoguchi S.D."/>
            <person name="Warrener P."/>
            <person name="Hickey M.J."/>
            <person name="Brinkman F.S.L."/>
            <person name="Hufnagle W.O."/>
            <person name="Kowalik D.J."/>
            <person name="Lagrou M."/>
            <person name="Garber R.L."/>
            <person name="Goltry L."/>
            <person name="Tolentino E."/>
            <person name="Westbrock-Wadman S."/>
            <person name="Yuan Y."/>
            <person name="Brody L.L."/>
            <person name="Coulter S.N."/>
            <person name="Folger K.R."/>
            <person name="Kas A."/>
            <person name="Larbig K."/>
            <person name="Lim R.M."/>
            <person name="Smith K.A."/>
            <person name="Spencer D.H."/>
            <person name="Wong G.K.-S."/>
            <person name="Wu Z."/>
            <person name="Paulsen I.T."/>
            <person name="Reizer J."/>
            <person name="Saier M.H. Jr."/>
            <person name="Hancock R.E.W."/>
            <person name="Lory S."/>
            <person name="Olson M.V."/>
        </authorList>
    </citation>
    <scope>NUCLEOTIDE SEQUENCE [LARGE SCALE GENOMIC DNA]</scope>
    <source>
        <strain>ATCC 15692 / DSM 22644 / CIP 104116 / JCM 14847 / LMG 12228 / 1C / PRS 101 / PAO1</strain>
    </source>
</reference>
<keyword id="KW-0002">3D-structure</keyword>
<keyword id="KW-0131">Cell cycle</keyword>
<keyword id="KW-0132">Cell division</keyword>
<keyword id="KW-0997">Cell inner membrane</keyword>
<keyword id="KW-1003">Cell membrane</keyword>
<keyword id="KW-0472">Membrane</keyword>
<keyword id="KW-1185">Reference proteome</keyword>
<keyword id="KW-0812">Transmembrane</keyword>
<keyword id="KW-1133">Transmembrane helix</keyword>
<comment type="function">
    <text evidence="1">Essential cell division protein. May link together the upstream cell division proteins, which are predominantly cytoplasmic, with the downstream cell division proteins, which are predominantly periplasmic.</text>
</comment>
<comment type="subunit">
    <text evidence="1">Part of a complex composed of FtsB, FtsL and FtsQ.</text>
</comment>
<comment type="subcellular location">
    <subcellularLocation>
        <location evidence="1">Cell inner membrane</location>
        <topology evidence="1">Single-pass type II membrane protein</topology>
    </subcellularLocation>
    <text evidence="1">Localizes to the division septum where it forms a ring structure.</text>
</comment>
<comment type="similarity">
    <text evidence="1">Belongs to the FtsL family.</text>
</comment>
<evidence type="ECO:0000255" key="1">
    <source>
        <dbReference type="HAMAP-Rule" id="MF_00910"/>
    </source>
</evidence>
<evidence type="ECO:0007829" key="2">
    <source>
        <dbReference type="PDB" id="8P1U"/>
    </source>
</evidence>